<sequence length="215" mass="23829">MLQVYLVRHGETLWNAARRIQGQSDSPLTEIGIRQAHLVAQRVRNQGITHIISSDLGRTQQTAKIIADACGLTMVTDPRLRELNMGVLENRPIDSLTPEEEQWRKQMVNGTEGARIPEGESMTELGRRMHAALDSCLELPAGSKPLLVSHGMALGCLLSTLLGLPAHAERRLRLRNCSLSRVDYQESPWLASGWVIESAGDTAHLDMPALDELQR</sequence>
<name>GPMB_YERPN</name>
<accession>Q1CMX2</accession>
<accession>C4GNM8</accession>
<comment type="catalytic activity">
    <reaction evidence="1">
        <text>(2R)-2-phosphoglycerate = (2R)-3-phosphoglycerate</text>
        <dbReference type="Rhea" id="RHEA:15901"/>
        <dbReference type="ChEBI" id="CHEBI:58272"/>
        <dbReference type="ChEBI" id="CHEBI:58289"/>
    </reaction>
</comment>
<comment type="pathway">
    <text evidence="1">Carbohydrate degradation; glycolysis; pyruvate from D-glyceraldehyde 3-phosphate: step 3/5.</text>
</comment>
<comment type="similarity">
    <text evidence="1">Belongs to the phosphoglycerate mutase family. GpmB subfamily.</text>
</comment>
<proteinExistence type="inferred from homology"/>
<evidence type="ECO:0000255" key="1">
    <source>
        <dbReference type="HAMAP-Rule" id="MF_01040"/>
    </source>
</evidence>
<feature type="chain" id="PRO_1000064137" description="Probable phosphoglycerate mutase GpmB">
    <location>
        <begin position="1"/>
        <end position="215"/>
    </location>
</feature>
<feature type="active site" description="Tele-phosphohistidine intermediate" evidence="1">
    <location>
        <position position="9"/>
    </location>
</feature>
<feature type="active site" description="Proton donor/acceptor" evidence="1">
    <location>
        <position position="82"/>
    </location>
</feature>
<feature type="binding site" evidence="1">
    <location>
        <begin position="8"/>
        <end position="15"/>
    </location>
    <ligand>
        <name>substrate</name>
    </ligand>
</feature>
<feature type="binding site" evidence="1">
    <location>
        <begin position="21"/>
        <end position="22"/>
    </location>
    <ligand>
        <name>substrate</name>
    </ligand>
</feature>
<feature type="binding site" evidence="1">
    <location>
        <position position="58"/>
    </location>
    <ligand>
        <name>substrate</name>
    </ligand>
</feature>
<feature type="binding site" evidence="1">
    <location>
        <begin position="82"/>
        <end position="85"/>
    </location>
    <ligand>
        <name>substrate</name>
    </ligand>
</feature>
<feature type="binding site" evidence="1">
    <location>
        <begin position="151"/>
        <end position="152"/>
    </location>
    <ligand>
        <name>substrate</name>
    </ligand>
</feature>
<feature type="site" description="Transition state stabilizer" evidence="1">
    <location>
        <position position="150"/>
    </location>
</feature>
<organism>
    <name type="scientific">Yersinia pestis bv. Antiqua (strain Nepal516)</name>
    <dbReference type="NCBI Taxonomy" id="377628"/>
    <lineage>
        <taxon>Bacteria</taxon>
        <taxon>Pseudomonadati</taxon>
        <taxon>Pseudomonadota</taxon>
        <taxon>Gammaproteobacteria</taxon>
        <taxon>Enterobacterales</taxon>
        <taxon>Yersiniaceae</taxon>
        <taxon>Yersinia</taxon>
    </lineage>
</organism>
<reference key="1">
    <citation type="journal article" date="2006" name="J. Bacteriol.">
        <title>Complete genome sequence of Yersinia pestis strains Antiqua and Nepal516: evidence of gene reduction in an emerging pathogen.</title>
        <authorList>
            <person name="Chain P.S.G."/>
            <person name="Hu P."/>
            <person name="Malfatti S.A."/>
            <person name="Radnedge L."/>
            <person name="Larimer F."/>
            <person name="Vergez L.M."/>
            <person name="Worsham P."/>
            <person name="Chu M.C."/>
            <person name="Andersen G.L."/>
        </authorList>
    </citation>
    <scope>NUCLEOTIDE SEQUENCE [LARGE SCALE GENOMIC DNA]</scope>
    <source>
        <strain>Nepal516</strain>
    </source>
</reference>
<reference key="2">
    <citation type="submission" date="2009-04" db="EMBL/GenBank/DDBJ databases">
        <title>Yersinia pestis Nepal516A whole genome shotgun sequencing project.</title>
        <authorList>
            <person name="Plunkett G. III"/>
            <person name="Anderson B.D."/>
            <person name="Baumler D.J."/>
            <person name="Burland V."/>
            <person name="Cabot E.L."/>
            <person name="Glasner J.D."/>
            <person name="Mau B."/>
            <person name="Neeno-Eckwall E."/>
            <person name="Perna N.T."/>
            <person name="Munk A.C."/>
            <person name="Tapia R."/>
            <person name="Green L.D."/>
            <person name="Rogers Y.C."/>
            <person name="Detter J.C."/>
            <person name="Bruce D.C."/>
            <person name="Brettin T.S."/>
        </authorList>
    </citation>
    <scope>NUCLEOTIDE SEQUENCE [LARGE SCALE GENOMIC DNA]</scope>
    <source>
        <strain>Nepal516</strain>
    </source>
</reference>
<dbReference type="EC" id="5.4.2.-" evidence="1"/>
<dbReference type="EMBL" id="CP000305">
    <property type="protein sequence ID" value="ABG16658.1"/>
    <property type="molecule type" value="Genomic_DNA"/>
</dbReference>
<dbReference type="EMBL" id="ACNQ01000006">
    <property type="protein sequence ID" value="EEO78110.1"/>
    <property type="molecule type" value="Genomic_DNA"/>
</dbReference>
<dbReference type="RefSeq" id="WP_002209230.1">
    <property type="nucleotide sequence ID" value="NZ_ACNQ01000006.1"/>
</dbReference>
<dbReference type="SMR" id="Q1CMX2"/>
<dbReference type="GeneID" id="57974154"/>
<dbReference type="KEGG" id="ypn:YPN_0326"/>
<dbReference type="HOGENOM" id="CLU_033323_9_5_6"/>
<dbReference type="UniPathway" id="UPA00109">
    <property type="reaction ID" value="UER00186"/>
</dbReference>
<dbReference type="Proteomes" id="UP000008936">
    <property type="component" value="Chromosome"/>
</dbReference>
<dbReference type="GO" id="GO:0005737">
    <property type="term" value="C:cytoplasm"/>
    <property type="evidence" value="ECO:0007669"/>
    <property type="project" value="TreeGrafter"/>
</dbReference>
<dbReference type="GO" id="GO:0016791">
    <property type="term" value="F:phosphatase activity"/>
    <property type="evidence" value="ECO:0007669"/>
    <property type="project" value="TreeGrafter"/>
</dbReference>
<dbReference type="GO" id="GO:0004619">
    <property type="term" value="F:phosphoglycerate mutase activity"/>
    <property type="evidence" value="ECO:0007669"/>
    <property type="project" value="UniProtKB-UniRule"/>
</dbReference>
<dbReference type="GO" id="GO:0006096">
    <property type="term" value="P:glycolytic process"/>
    <property type="evidence" value="ECO:0007669"/>
    <property type="project" value="UniProtKB-UniRule"/>
</dbReference>
<dbReference type="CDD" id="cd07067">
    <property type="entry name" value="HP_PGM_like"/>
    <property type="match status" value="1"/>
</dbReference>
<dbReference type="Gene3D" id="3.40.50.1240">
    <property type="entry name" value="Phosphoglycerate mutase-like"/>
    <property type="match status" value="1"/>
</dbReference>
<dbReference type="HAMAP" id="MF_01040">
    <property type="entry name" value="PGAM_GpmB"/>
    <property type="match status" value="1"/>
</dbReference>
<dbReference type="InterPro" id="IPR013078">
    <property type="entry name" value="His_Pase_superF_clade-1"/>
</dbReference>
<dbReference type="InterPro" id="IPR029033">
    <property type="entry name" value="His_PPase_superfam"/>
</dbReference>
<dbReference type="InterPro" id="IPR001345">
    <property type="entry name" value="PG/BPGM_mutase_AS"/>
</dbReference>
<dbReference type="InterPro" id="IPR050275">
    <property type="entry name" value="PGM_Phosphatase"/>
</dbReference>
<dbReference type="InterPro" id="IPR023086">
    <property type="entry name" value="Phosphoglycerate_mutase_GpmB"/>
</dbReference>
<dbReference type="NCBIfam" id="NF002901">
    <property type="entry name" value="PRK03482.1"/>
    <property type="match status" value="1"/>
</dbReference>
<dbReference type="PANTHER" id="PTHR48100">
    <property type="entry name" value="BROAD-SPECIFICITY PHOSPHATASE YOR283W-RELATED"/>
    <property type="match status" value="1"/>
</dbReference>
<dbReference type="PANTHER" id="PTHR48100:SF1">
    <property type="entry name" value="HISTIDINE PHOSPHATASE FAMILY PROTEIN-RELATED"/>
    <property type="match status" value="1"/>
</dbReference>
<dbReference type="Pfam" id="PF00300">
    <property type="entry name" value="His_Phos_1"/>
    <property type="match status" value="1"/>
</dbReference>
<dbReference type="SMART" id="SM00855">
    <property type="entry name" value="PGAM"/>
    <property type="match status" value="1"/>
</dbReference>
<dbReference type="SUPFAM" id="SSF53254">
    <property type="entry name" value="Phosphoglycerate mutase-like"/>
    <property type="match status" value="1"/>
</dbReference>
<dbReference type="PROSITE" id="PS00175">
    <property type="entry name" value="PG_MUTASE"/>
    <property type="match status" value="1"/>
</dbReference>
<gene>
    <name evidence="1" type="primary">gpmB</name>
    <name type="ordered locus">YPN_0326</name>
    <name type="ORF">YP516_0332</name>
</gene>
<keyword id="KW-0324">Glycolysis</keyword>
<keyword id="KW-0413">Isomerase</keyword>
<protein>
    <recommendedName>
        <fullName evidence="1">Probable phosphoglycerate mutase GpmB</fullName>
        <ecNumber evidence="1">5.4.2.-</ecNumber>
    </recommendedName>
    <alternativeName>
        <fullName evidence="1">PGAM</fullName>
    </alternativeName>
    <alternativeName>
        <fullName evidence="1">Phosphoglyceromutase</fullName>
    </alternativeName>
</protein>